<dbReference type="EMBL" id="AE014295">
    <property type="protein sequence ID" value="AAN24134.1"/>
    <property type="molecule type" value="Genomic_DNA"/>
</dbReference>
<dbReference type="RefSeq" id="NP_695498.1">
    <property type="nucleotide sequence ID" value="NC_004307.2"/>
</dbReference>
<dbReference type="RefSeq" id="WP_007051413.1">
    <property type="nucleotide sequence ID" value="NC_004307.2"/>
</dbReference>
<dbReference type="SMR" id="Q8G7H2"/>
<dbReference type="STRING" id="206672.BL0294"/>
<dbReference type="EnsemblBacteria" id="AAN24134">
    <property type="protein sequence ID" value="AAN24134"/>
    <property type="gene ID" value="BL0294"/>
</dbReference>
<dbReference type="GeneID" id="69577563"/>
<dbReference type="KEGG" id="blo:BL0294"/>
<dbReference type="PATRIC" id="fig|206672.9.peg.1031"/>
<dbReference type="HOGENOM" id="CLU_129084_1_1_11"/>
<dbReference type="OrthoDB" id="9807363at2"/>
<dbReference type="PhylomeDB" id="Q8G7H2"/>
<dbReference type="Proteomes" id="UP000000439">
    <property type="component" value="Chromosome"/>
</dbReference>
<dbReference type="GO" id="GO:0015934">
    <property type="term" value="C:large ribosomal subunit"/>
    <property type="evidence" value="ECO:0007669"/>
    <property type="project" value="InterPro"/>
</dbReference>
<dbReference type="GO" id="GO:0003735">
    <property type="term" value="F:structural constituent of ribosome"/>
    <property type="evidence" value="ECO:0007669"/>
    <property type="project" value="InterPro"/>
</dbReference>
<dbReference type="GO" id="GO:0006412">
    <property type="term" value="P:translation"/>
    <property type="evidence" value="ECO:0007669"/>
    <property type="project" value="UniProtKB-UniRule"/>
</dbReference>
<dbReference type="HAMAP" id="MF_00340">
    <property type="entry name" value="Ribosomal_bL32"/>
    <property type="match status" value="1"/>
</dbReference>
<dbReference type="InterPro" id="IPR002677">
    <property type="entry name" value="Ribosomal_bL32"/>
</dbReference>
<dbReference type="InterPro" id="IPR044957">
    <property type="entry name" value="Ribosomal_bL32_bact"/>
</dbReference>
<dbReference type="InterPro" id="IPR011332">
    <property type="entry name" value="Ribosomal_zn-bd"/>
</dbReference>
<dbReference type="NCBIfam" id="TIGR01031">
    <property type="entry name" value="rpmF_bact"/>
    <property type="match status" value="1"/>
</dbReference>
<dbReference type="PANTHER" id="PTHR35534">
    <property type="entry name" value="50S RIBOSOMAL PROTEIN L32"/>
    <property type="match status" value="1"/>
</dbReference>
<dbReference type="PANTHER" id="PTHR35534:SF1">
    <property type="entry name" value="LARGE RIBOSOMAL SUBUNIT PROTEIN BL32"/>
    <property type="match status" value="1"/>
</dbReference>
<dbReference type="Pfam" id="PF01783">
    <property type="entry name" value="Ribosomal_L32p"/>
    <property type="match status" value="1"/>
</dbReference>
<dbReference type="SUPFAM" id="SSF57829">
    <property type="entry name" value="Zn-binding ribosomal proteins"/>
    <property type="match status" value="1"/>
</dbReference>
<feature type="chain" id="PRO_0000172311" description="Large ribosomal subunit protein bL32">
    <location>
        <begin position="1"/>
        <end position="64"/>
    </location>
</feature>
<sequence>MALPKYKTSRANTHSRRANWKATAAATVNCPNCGAPALPHMACPSCGNYRGRTYRSAIQPAHTK</sequence>
<keyword id="KW-1185">Reference proteome</keyword>
<keyword id="KW-0687">Ribonucleoprotein</keyword>
<keyword id="KW-0689">Ribosomal protein</keyword>
<name>RL32_BIFLO</name>
<protein>
    <recommendedName>
        <fullName evidence="1">Large ribosomal subunit protein bL32</fullName>
    </recommendedName>
    <alternativeName>
        <fullName evidence="2">50S ribosomal protein L32</fullName>
    </alternativeName>
</protein>
<evidence type="ECO:0000255" key="1">
    <source>
        <dbReference type="HAMAP-Rule" id="MF_00340"/>
    </source>
</evidence>
<evidence type="ECO:0000305" key="2"/>
<accession>Q8G7H2</accession>
<organism>
    <name type="scientific">Bifidobacterium longum (strain NCC 2705)</name>
    <dbReference type="NCBI Taxonomy" id="206672"/>
    <lineage>
        <taxon>Bacteria</taxon>
        <taxon>Bacillati</taxon>
        <taxon>Actinomycetota</taxon>
        <taxon>Actinomycetes</taxon>
        <taxon>Bifidobacteriales</taxon>
        <taxon>Bifidobacteriaceae</taxon>
        <taxon>Bifidobacterium</taxon>
    </lineage>
</organism>
<comment type="similarity">
    <text evidence="1">Belongs to the bacterial ribosomal protein bL32 family.</text>
</comment>
<proteinExistence type="inferred from homology"/>
<gene>
    <name evidence="1" type="primary">rpmF</name>
    <name type="ordered locus">BL0294</name>
</gene>
<reference key="1">
    <citation type="journal article" date="2002" name="Proc. Natl. Acad. Sci. U.S.A.">
        <title>The genome sequence of Bifidobacterium longum reflects its adaptation to the human gastrointestinal tract.</title>
        <authorList>
            <person name="Schell M.A."/>
            <person name="Karmirantzou M."/>
            <person name="Snel B."/>
            <person name="Vilanova D."/>
            <person name="Berger B."/>
            <person name="Pessi G."/>
            <person name="Zwahlen M.-C."/>
            <person name="Desiere F."/>
            <person name="Bork P."/>
            <person name="Delley M."/>
            <person name="Pridmore R.D."/>
            <person name="Arigoni F."/>
        </authorList>
    </citation>
    <scope>NUCLEOTIDE SEQUENCE [LARGE SCALE GENOMIC DNA]</scope>
    <source>
        <strain>NCC 2705</strain>
    </source>
</reference>